<feature type="chain" id="PRO_0000156787" description="Putative competence-damage inducible protein">
    <location>
        <begin position="1"/>
        <end position="412"/>
    </location>
</feature>
<name>CINA_CALS4</name>
<sequence length="412" mass="45446">MRGEIISVGTELLLGQIVNTNAKYLSERLALLGIDIYFHTNVGDNEERLKQCLKIAYERSELIITTGGLGPTVDDITKETIASFLNLPLVESEEAKQEIINFFERIGQKPTENNFKQALFPAGSKILPNKNGTAPGFILEKEGKIFVVLPGPPSELIPMFEEHVYPYLKRFTSETIKSRVLKIFGLGESKVEEMVRPLLQGSNPTVAPLVGDGYVTLRITAKGKEEEVYEMISQVEKKIREILGEYIYAVDDEEMEEIVIKLLQKRGFTLATAESCTGGLLAKKITDVPGASKVFNLGVVTYSNEAKEKVLGVKKSTLDAHGAVSPETAKEMAENVRVLAKSDLGLSTTGIAGPSGGSPEKPVGLVYVGFATPEKTYVKKLMLSGNRDRIRTRSMLHAFDMVRRYLEGRQID</sequence>
<evidence type="ECO:0000255" key="1">
    <source>
        <dbReference type="HAMAP-Rule" id="MF_00226"/>
    </source>
</evidence>
<protein>
    <recommendedName>
        <fullName evidence="1">Putative competence-damage inducible protein</fullName>
    </recommendedName>
</protein>
<gene>
    <name evidence="1" type="primary">cinA</name>
    <name type="ordered locus">TTE1375</name>
</gene>
<accession>Q8RA54</accession>
<organism>
    <name type="scientific">Caldanaerobacter subterraneus subsp. tengcongensis (strain DSM 15242 / JCM 11007 / NBRC 100824 / MB4)</name>
    <name type="common">Thermoanaerobacter tengcongensis</name>
    <dbReference type="NCBI Taxonomy" id="273068"/>
    <lineage>
        <taxon>Bacteria</taxon>
        <taxon>Bacillati</taxon>
        <taxon>Bacillota</taxon>
        <taxon>Clostridia</taxon>
        <taxon>Thermoanaerobacterales</taxon>
        <taxon>Thermoanaerobacteraceae</taxon>
        <taxon>Caldanaerobacter</taxon>
    </lineage>
</organism>
<reference key="1">
    <citation type="journal article" date="2002" name="Genome Res.">
        <title>A complete sequence of the T. tengcongensis genome.</title>
        <authorList>
            <person name="Bao Q."/>
            <person name="Tian Y."/>
            <person name="Li W."/>
            <person name="Xu Z."/>
            <person name="Xuan Z."/>
            <person name="Hu S."/>
            <person name="Dong W."/>
            <person name="Yang J."/>
            <person name="Chen Y."/>
            <person name="Xue Y."/>
            <person name="Xu Y."/>
            <person name="Lai X."/>
            <person name="Huang L."/>
            <person name="Dong X."/>
            <person name="Ma Y."/>
            <person name="Ling L."/>
            <person name="Tan H."/>
            <person name="Chen R."/>
            <person name="Wang J."/>
            <person name="Yu J."/>
            <person name="Yang H."/>
        </authorList>
    </citation>
    <scope>NUCLEOTIDE SEQUENCE [LARGE SCALE GENOMIC DNA]</scope>
    <source>
        <strain>DSM 15242 / JCM 11007 / NBRC 100824 / MB4</strain>
    </source>
</reference>
<comment type="similarity">
    <text evidence="1">Belongs to the CinA family.</text>
</comment>
<keyword id="KW-1185">Reference proteome</keyword>
<dbReference type="EMBL" id="AE008691">
    <property type="protein sequence ID" value="AAM24597.1"/>
    <property type="molecule type" value="Genomic_DNA"/>
</dbReference>
<dbReference type="RefSeq" id="WP_009610686.1">
    <property type="nucleotide sequence ID" value="NC_003869.1"/>
</dbReference>
<dbReference type="SMR" id="Q8RA54"/>
<dbReference type="STRING" id="273068.TTE1375"/>
<dbReference type="KEGG" id="tte:TTE1375"/>
<dbReference type="eggNOG" id="COG1058">
    <property type="taxonomic scope" value="Bacteria"/>
</dbReference>
<dbReference type="eggNOG" id="COG1546">
    <property type="taxonomic scope" value="Bacteria"/>
</dbReference>
<dbReference type="HOGENOM" id="CLU_030805_9_3_9"/>
<dbReference type="OrthoDB" id="9801454at2"/>
<dbReference type="Proteomes" id="UP000000555">
    <property type="component" value="Chromosome"/>
</dbReference>
<dbReference type="CDD" id="cd00885">
    <property type="entry name" value="cinA"/>
    <property type="match status" value="1"/>
</dbReference>
<dbReference type="Gene3D" id="3.30.70.2860">
    <property type="match status" value="1"/>
</dbReference>
<dbReference type="Gene3D" id="3.90.950.20">
    <property type="entry name" value="CinA-like"/>
    <property type="match status" value="1"/>
</dbReference>
<dbReference type="Gene3D" id="3.40.980.10">
    <property type="entry name" value="MoaB/Mog-like domain"/>
    <property type="match status" value="1"/>
</dbReference>
<dbReference type="HAMAP" id="MF_00226_B">
    <property type="entry name" value="CinA_B"/>
    <property type="match status" value="1"/>
</dbReference>
<dbReference type="InterPro" id="IPR050101">
    <property type="entry name" value="CinA"/>
</dbReference>
<dbReference type="InterPro" id="IPR036653">
    <property type="entry name" value="CinA-like_C"/>
</dbReference>
<dbReference type="InterPro" id="IPR008136">
    <property type="entry name" value="CinA_C"/>
</dbReference>
<dbReference type="InterPro" id="IPR041424">
    <property type="entry name" value="CinA_KH"/>
</dbReference>
<dbReference type="InterPro" id="IPR008135">
    <property type="entry name" value="Competence-induced_CinA"/>
</dbReference>
<dbReference type="InterPro" id="IPR036425">
    <property type="entry name" value="MoaB/Mog-like_dom_sf"/>
</dbReference>
<dbReference type="InterPro" id="IPR001453">
    <property type="entry name" value="MoaB/Mog_dom"/>
</dbReference>
<dbReference type="NCBIfam" id="TIGR00200">
    <property type="entry name" value="cinA_nterm"/>
    <property type="match status" value="1"/>
</dbReference>
<dbReference type="NCBIfam" id="TIGR00177">
    <property type="entry name" value="molyb_syn"/>
    <property type="match status" value="1"/>
</dbReference>
<dbReference type="NCBIfam" id="TIGR00199">
    <property type="entry name" value="PncC_domain"/>
    <property type="match status" value="1"/>
</dbReference>
<dbReference type="NCBIfam" id="NF001813">
    <property type="entry name" value="PRK00549.1"/>
    <property type="match status" value="1"/>
</dbReference>
<dbReference type="PANTHER" id="PTHR13939">
    <property type="entry name" value="NICOTINAMIDE-NUCLEOTIDE AMIDOHYDROLASE PNCC"/>
    <property type="match status" value="1"/>
</dbReference>
<dbReference type="PANTHER" id="PTHR13939:SF0">
    <property type="entry name" value="NMN AMIDOHYDROLASE-LIKE PROTEIN YFAY"/>
    <property type="match status" value="1"/>
</dbReference>
<dbReference type="Pfam" id="PF02464">
    <property type="entry name" value="CinA"/>
    <property type="match status" value="1"/>
</dbReference>
<dbReference type="Pfam" id="PF18146">
    <property type="entry name" value="CinA_KH"/>
    <property type="match status" value="1"/>
</dbReference>
<dbReference type="Pfam" id="PF00994">
    <property type="entry name" value="MoCF_biosynth"/>
    <property type="match status" value="1"/>
</dbReference>
<dbReference type="PIRSF" id="PIRSF006728">
    <property type="entry name" value="CinA"/>
    <property type="match status" value="1"/>
</dbReference>
<dbReference type="SMART" id="SM00852">
    <property type="entry name" value="MoCF_biosynth"/>
    <property type="match status" value="1"/>
</dbReference>
<dbReference type="SUPFAM" id="SSF142433">
    <property type="entry name" value="CinA-like"/>
    <property type="match status" value="1"/>
</dbReference>
<dbReference type="SUPFAM" id="SSF53218">
    <property type="entry name" value="Molybdenum cofactor biosynthesis proteins"/>
    <property type="match status" value="1"/>
</dbReference>
<proteinExistence type="inferred from homology"/>